<accession>A5V5X4</accession>
<proteinExistence type="inferred from homology"/>
<organism>
    <name type="scientific">Rhizorhabdus wittichii (strain DSM 6014 / CCUG 31198 / JCM 15750 / NBRC 105917 / EY 4224 / RW1)</name>
    <name type="common">Sphingomonas wittichii</name>
    <dbReference type="NCBI Taxonomy" id="392499"/>
    <lineage>
        <taxon>Bacteria</taxon>
        <taxon>Pseudomonadati</taxon>
        <taxon>Pseudomonadota</taxon>
        <taxon>Alphaproteobacteria</taxon>
        <taxon>Sphingomonadales</taxon>
        <taxon>Sphingomonadaceae</taxon>
        <taxon>Rhizorhabdus</taxon>
    </lineage>
</organism>
<dbReference type="EMBL" id="CP000699">
    <property type="protein sequence ID" value="ABQ67690.1"/>
    <property type="molecule type" value="Genomic_DNA"/>
</dbReference>
<dbReference type="SMR" id="A5V5X4"/>
<dbReference type="STRING" id="392499.Swit_1325"/>
<dbReference type="PaxDb" id="392499-Swit_1325"/>
<dbReference type="KEGG" id="swi:Swit_1325"/>
<dbReference type="eggNOG" id="COG0203">
    <property type="taxonomic scope" value="Bacteria"/>
</dbReference>
<dbReference type="HOGENOM" id="CLU_074407_2_0_5"/>
<dbReference type="OrthoDB" id="9809073at2"/>
<dbReference type="Proteomes" id="UP000001989">
    <property type="component" value="Chromosome"/>
</dbReference>
<dbReference type="GO" id="GO:0022625">
    <property type="term" value="C:cytosolic large ribosomal subunit"/>
    <property type="evidence" value="ECO:0007669"/>
    <property type="project" value="TreeGrafter"/>
</dbReference>
<dbReference type="GO" id="GO:0003735">
    <property type="term" value="F:structural constituent of ribosome"/>
    <property type="evidence" value="ECO:0007669"/>
    <property type="project" value="InterPro"/>
</dbReference>
<dbReference type="GO" id="GO:0006412">
    <property type="term" value="P:translation"/>
    <property type="evidence" value="ECO:0007669"/>
    <property type="project" value="UniProtKB-UniRule"/>
</dbReference>
<dbReference type="FunFam" id="3.90.1030.10:FF:000001">
    <property type="entry name" value="50S ribosomal protein L17"/>
    <property type="match status" value="1"/>
</dbReference>
<dbReference type="Gene3D" id="3.90.1030.10">
    <property type="entry name" value="Ribosomal protein L17"/>
    <property type="match status" value="1"/>
</dbReference>
<dbReference type="HAMAP" id="MF_01368">
    <property type="entry name" value="Ribosomal_bL17"/>
    <property type="match status" value="1"/>
</dbReference>
<dbReference type="InterPro" id="IPR000456">
    <property type="entry name" value="Ribosomal_bL17"/>
</dbReference>
<dbReference type="InterPro" id="IPR047859">
    <property type="entry name" value="Ribosomal_bL17_CS"/>
</dbReference>
<dbReference type="InterPro" id="IPR036373">
    <property type="entry name" value="Ribosomal_bL17_sf"/>
</dbReference>
<dbReference type="NCBIfam" id="TIGR00059">
    <property type="entry name" value="L17"/>
    <property type="match status" value="1"/>
</dbReference>
<dbReference type="PANTHER" id="PTHR14413:SF16">
    <property type="entry name" value="LARGE RIBOSOMAL SUBUNIT PROTEIN BL17M"/>
    <property type="match status" value="1"/>
</dbReference>
<dbReference type="PANTHER" id="PTHR14413">
    <property type="entry name" value="RIBOSOMAL PROTEIN L17"/>
    <property type="match status" value="1"/>
</dbReference>
<dbReference type="Pfam" id="PF01196">
    <property type="entry name" value="Ribosomal_L17"/>
    <property type="match status" value="1"/>
</dbReference>
<dbReference type="SUPFAM" id="SSF64263">
    <property type="entry name" value="Prokaryotic ribosomal protein L17"/>
    <property type="match status" value="1"/>
</dbReference>
<dbReference type="PROSITE" id="PS01167">
    <property type="entry name" value="RIBOSOMAL_L17"/>
    <property type="match status" value="1"/>
</dbReference>
<gene>
    <name evidence="1" type="primary">rplQ</name>
    <name type="ordered locus">Swit_1325</name>
</gene>
<protein>
    <recommendedName>
        <fullName evidence="1">Large ribosomal subunit protein bL17</fullName>
    </recommendedName>
    <alternativeName>
        <fullName evidence="2">50S ribosomal protein L17</fullName>
    </alternativeName>
</protein>
<evidence type="ECO:0000255" key="1">
    <source>
        <dbReference type="HAMAP-Rule" id="MF_01368"/>
    </source>
</evidence>
<evidence type="ECO:0000305" key="2"/>
<name>RL17_RHIWR</name>
<comment type="subunit">
    <text evidence="1">Part of the 50S ribosomal subunit. Contacts protein L32.</text>
</comment>
<comment type="similarity">
    <text evidence="1">Belongs to the bacterial ribosomal protein bL17 family.</text>
</comment>
<sequence>MRHRVGGRKLQRTASHRTALFRNQSAALIKHEQILTTLAKAKELRPYVEKLITLAKKGGLANRRLAHARLQDDTQLKKLFEVLAERYASRNGGYTRIVKAGIRASDAASMAIIEFVDRDVSAKGQDSGPVETDEDVAEAA</sequence>
<reference key="1">
    <citation type="journal article" date="2010" name="J. Bacteriol.">
        <title>Genome sequence of the dioxin-mineralizing bacterium Sphingomonas wittichii RW1.</title>
        <authorList>
            <person name="Miller T.R."/>
            <person name="Delcher A.L."/>
            <person name="Salzberg S.L."/>
            <person name="Saunders E."/>
            <person name="Detter J.C."/>
            <person name="Halden R.U."/>
        </authorList>
    </citation>
    <scope>NUCLEOTIDE SEQUENCE [LARGE SCALE GENOMIC DNA]</scope>
    <source>
        <strain>DSM 6014 / CCUG 31198 / JCM 15750 / NBRC 105917 / EY 4224 / RW1</strain>
    </source>
</reference>
<keyword id="KW-1185">Reference proteome</keyword>
<keyword id="KW-0687">Ribonucleoprotein</keyword>
<keyword id="KW-0689">Ribosomal protein</keyword>
<feature type="chain" id="PRO_1000055947" description="Large ribosomal subunit protein bL17">
    <location>
        <begin position="1"/>
        <end position="140"/>
    </location>
</feature>